<comment type="function">
    <text evidence="8 9 10 11 12">Plays a role in constitutive metalloproteinase (MMP) secretion from the trans Golgi network (PubMed:26507660). May have important functions during vesicle biogenesis at certain cargo subdomains, which could be predominantly utilized by secreted MMPs, such as MMP7 and MMP2 (PubMed:26507660). Also involved in autophagy by regulating the starvation-dependent trafficking of ATG9A vesicles which deliver the phosphatidylinositol 4-kinase beta (PI4KB) to the autophagosome initiation site (PubMed:30917996, PubMed:31204568). Involved in phagophore growth during mitophagy by regulating ATG9A trafficking to mitochondria (PubMed:33773106). In addition, plays a role in NF-kappa-B inhibition by interacting with IKBKB and IKBKG (PubMed:26296658).</text>
</comment>
<comment type="subunit">
    <text evidence="3 4 5 6 8 9">Forms homodimers or heterodimers with ARFIP1 (PubMed:21239483). Interacts with RAC1 (PubMed:11346801). Specifically binds to GTP-bound ARF1 and ARF6, but binds to RAC1.GTP and RAC1.GDP with similar affinities. Interacts with ARL1 (PubMed:11303027, PubMed:22679020, PubMed:26507660). Interacts (via N-terminus) with IKBKB and IKBKG; these interactions inhibit activation of NF-kappa-B (PubMed:26296658).</text>
</comment>
<comment type="interaction">
    <interactant intactId="EBI-638194">
        <id>P53365</id>
    </interactant>
    <interactant intactId="EBI-741181">
        <id>Q6RW13</id>
        <label>AGTRAP</label>
    </interactant>
    <organismsDiffer>false</organismsDiffer>
    <experiments>4</experiments>
</comment>
<comment type="interaction">
    <interactant intactId="EBI-638194">
        <id>P53365</id>
    </interactant>
    <interactant intactId="EBI-11522760">
        <id>Q6RW13-2</id>
        <label>AGTRAP</label>
    </interactant>
    <organismsDiffer>false</organismsDiffer>
    <experiments>3</experiments>
</comment>
<comment type="interaction">
    <interactant intactId="EBI-638194">
        <id>P53365</id>
    </interactant>
    <interactant intactId="EBI-447171">
        <id>P84077</id>
        <label>ARF1</label>
    </interactant>
    <organismsDiffer>false</organismsDiffer>
    <experiments>3</experiments>
</comment>
<comment type="interaction">
    <interactant intactId="EBI-638194">
        <id>P53365</id>
    </interactant>
    <interactant intactId="EBI-638181">
        <id>P62330</id>
        <label>ARF6</label>
    </interactant>
    <organismsDiffer>false</organismsDiffer>
    <experiments>4</experiments>
</comment>
<comment type="interaction">
    <interactant intactId="EBI-638194">
        <id>P53365</id>
    </interactant>
    <interactant intactId="EBI-2808808">
        <id>P53367</id>
        <label>ARFIP1</label>
    </interactant>
    <organismsDiffer>false</organismsDiffer>
    <experiments>7</experiments>
</comment>
<comment type="interaction">
    <interactant intactId="EBI-638194">
        <id>P53365</id>
    </interactant>
    <interactant intactId="EBI-638194">
        <id>P53365</id>
        <label>ARFIP2</label>
    </interactant>
    <organismsDiffer>false</organismsDiffer>
    <experiments>10</experiments>
</comment>
<comment type="interaction">
    <interactant intactId="EBI-638194">
        <id>P53365</id>
    </interactant>
    <interactant intactId="EBI-465872">
        <id>Q6QNY1</id>
        <label>BLOC1S2</label>
    </interactant>
    <organismsDiffer>false</organismsDiffer>
    <experiments>3</experiments>
</comment>
<comment type="interaction">
    <interactant intactId="EBI-638194">
        <id>P53365</id>
    </interactant>
    <interactant intactId="EBI-741214">
        <id>Q9UFG5</id>
        <label>C19orf25</label>
    </interactant>
    <organismsDiffer>false</organismsDiffer>
    <experiments>3</experiments>
</comment>
<comment type="interaction">
    <interactant intactId="EBI-638194">
        <id>P53365</id>
    </interactant>
    <interactant intactId="EBI-2836538">
        <id>P51861</id>
        <label>CDR1</label>
    </interactant>
    <organismsDiffer>false</organismsDiffer>
    <experiments>3</experiments>
</comment>
<comment type="interaction">
    <interactant intactId="EBI-638194">
        <id>P53365</id>
    </interactant>
    <interactant intactId="EBI-741977">
        <id>Q96MT8</id>
        <label>CEP63</label>
    </interactant>
    <organismsDiffer>false</organismsDiffer>
    <experiments>3</experiments>
</comment>
<comment type="interaction">
    <interactant intactId="EBI-638194">
        <id>P53365</id>
    </interactant>
    <interactant intactId="EBI-11522780">
        <id>Q96DZ9-2</id>
        <label>CMTM5</label>
    </interactant>
    <organismsDiffer>false</organismsDiffer>
    <experiments>3</experiments>
</comment>
<comment type="interaction">
    <interactant intactId="EBI-638194">
        <id>P53365</id>
    </interactant>
    <interactant intactId="EBI-11974015">
        <id>O43739-2</id>
        <label>CYTH3</label>
    </interactant>
    <organismsDiffer>false</organismsDiffer>
    <experiments>3</experiments>
</comment>
<comment type="interaction">
    <interactant intactId="EBI-638194">
        <id>P53365</id>
    </interactant>
    <interactant intactId="EBI-12831978">
        <id>Q6ZPD8</id>
        <label>DGAT2L6</label>
    </interactant>
    <organismsDiffer>false</organismsDiffer>
    <experiments>3</experiments>
</comment>
<comment type="interaction">
    <interactant intactId="EBI-638194">
        <id>P53365</id>
    </interactant>
    <interactant intactId="EBI-399105">
        <id>Q9NPF5</id>
        <label>DMAP1</label>
    </interactant>
    <organismsDiffer>false</organismsDiffer>
    <experiments>3</experiments>
</comment>
<comment type="interaction">
    <interactant intactId="EBI-638194">
        <id>P53365</id>
    </interactant>
    <interactant intactId="EBI-3943864">
        <id>Q8N9I5</id>
        <label>FADS6</label>
    </interactant>
    <organismsDiffer>false</organismsDiffer>
    <experiments>3</experiments>
</comment>
<comment type="interaction">
    <interactant intactId="EBI-638194">
        <id>P53365</id>
    </interactant>
    <interactant intactId="EBI-5661036">
        <id>A1L4K1</id>
        <label>FSD2</label>
    </interactant>
    <organismsDiffer>false</organismsDiffer>
    <experiments>3</experiments>
</comment>
<comment type="interaction">
    <interactant intactId="EBI-638194">
        <id>P53365</id>
    </interactant>
    <interactant intactId="EBI-618309">
        <id>Q08379</id>
        <label>GOLGA2</label>
    </interactant>
    <organismsDiffer>false</organismsDiffer>
    <experiments>3</experiments>
</comment>
<comment type="interaction">
    <interactant intactId="EBI-638194">
        <id>P53365</id>
    </interactant>
    <interactant intactId="EBI-12951679">
        <id>Q2KHT4-3</id>
        <label>GSG1</label>
    </interactant>
    <organismsDiffer>false</organismsDiffer>
    <experiments>3</experiments>
</comment>
<comment type="interaction">
    <interactant intactId="EBI-638194">
        <id>P53365</id>
    </interactant>
    <interactant intactId="EBI-2514791">
        <id>Q96CS2</id>
        <label>HAUS1</label>
    </interactant>
    <organismsDiffer>false</organismsDiffer>
    <experiments>3</experiments>
</comment>
<comment type="interaction">
    <interactant intactId="EBI-638194">
        <id>P53365</id>
    </interactant>
    <interactant intactId="EBI-740220">
        <id>O14964</id>
        <label>HGS</label>
    </interactant>
    <organismsDiffer>false</organismsDiffer>
    <experiments>3</experiments>
</comment>
<comment type="interaction">
    <interactant intactId="EBI-638194">
        <id>P53365</id>
    </interactant>
    <interactant intactId="EBI-466029">
        <id>P42858</id>
        <label>HTT</label>
    </interactant>
    <organismsDiffer>false</organismsDiffer>
    <experiments>3</experiments>
</comment>
<comment type="interaction">
    <interactant intactId="EBI-638194">
        <id>P53365</id>
    </interactant>
    <interactant intactId="EBI-488533">
        <id>Q8WYH8</id>
        <label>ING5</label>
    </interactant>
    <organismsDiffer>false</organismsDiffer>
    <experiments>3</experiments>
</comment>
<comment type="interaction">
    <interactant intactId="EBI-638194">
        <id>P53365</id>
    </interactant>
    <interactant intactId="EBI-712105">
        <id>Q13352</id>
        <label>ITGB3BP</label>
    </interactant>
    <organismsDiffer>false</organismsDiffer>
    <experiments>4</experiments>
</comment>
<comment type="interaction">
    <interactant intactId="EBI-638194">
        <id>P53365</id>
    </interactant>
    <interactant intactId="EBI-10175826">
        <id>Q13352-5</id>
        <label>ITGB3BP</label>
    </interactant>
    <organismsDiffer>false</organismsDiffer>
    <experiments>3</experiments>
</comment>
<comment type="interaction">
    <interactant intactId="EBI-638194">
        <id>P53365</id>
    </interactant>
    <interactant intactId="EBI-739566">
        <id>P19012</id>
        <label>KRT15</label>
    </interactant>
    <organismsDiffer>false</organismsDiffer>
    <experiments>6</experiments>
</comment>
<comment type="interaction">
    <interactant intactId="EBI-638194">
        <id>P53365</id>
    </interactant>
    <interactant intactId="EBI-356410">
        <id>P08779</id>
        <label>KRT16</label>
    </interactant>
    <organismsDiffer>false</organismsDiffer>
    <experiments>3</experiments>
</comment>
<comment type="interaction">
    <interactant intactId="EBI-638194">
        <id>P53365</id>
    </interactant>
    <interactant intactId="EBI-21591415">
        <id>P13473-2</id>
        <label>LAMP2</label>
    </interactant>
    <organismsDiffer>false</organismsDiffer>
    <experiments>3</experiments>
</comment>
<comment type="interaction">
    <interactant intactId="EBI-638194">
        <id>P53365</id>
    </interactant>
    <interactant intactId="EBI-739832">
        <id>Q8TBB1</id>
        <label>LNX1</label>
    </interactant>
    <organismsDiffer>false</organismsDiffer>
    <experiments>3</experiments>
</comment>
<comment type="interaction">
    <interactant intactId="EBI-638194">
        <id>P53365</id>
    </interactant>
    <interactant intactId="EBI-944295">
        <id>Q969L2</id>
        <label>MAL2</label>
    </interactant>
    <organismsDiffer>false</organismsDiffer>
    <experiments>6</experiments>
</comment>
<comment type="interaction">
    <interactant intactId="EBI-638194">
        <id>P53365</id>
    </interactant>
    <interactant intactId="EBI-740987">
        <id>Q9NQG6</id>
        <label>MIEF1</label>
    </interactant>
    <organismsDiffer>false</organismsDiffer>
    <experiments>3</experiments>
</comment>
<comment type="interaction">
    <interactant intactId="EBI-638194">
        <id>P53365</id>
    </interactant>
    <interactant intactId="EBI-11988931">
        <id>Q96C03-3</id>
        <label>MIEF2</label>
    </interactant>
    <organismsDiffer>false</organismsDiffer>
    <experiments>3</experiments>
</comment>
<comment type="interaction">
    <interactant intactId="EBI-638194">
        <id>P53365</id>
    </interactant>
    <interactant intactId="EBI-11978907">
        <id>Q9ULP0-2</id>
        <label>NDRG4</label>
    </interactant>
    <organismsDiffer>false</organismsDiffer>
    <experiments>3</experiments>
</comment>
<comment type="interaction">
    <interactant intactId="EBI-638194">
        <id>P53365</id>
    </interactant>
    <interactant intactId="EBI-2007911">
        <id>Q16236</id>
        <label>NFE2L2</label>
    </interactant>
    <organismsDiffer>false</organismsDiffer>
    <experiments>2</experiments>
</comment>
<comment type="interaction">
    <interactant intactId="EBI-638194">
        <id>P53365</id>
    </interactant>
    <interactant intactId="EBI-1042642">
        <id>Q9H7Z3</id>
        <label>NRDE2</label>
    </interactant>
    <organismsDiffer>false</organismsDiffer>
    <experiments>3</experiments>
</comment>
<comment type="interaction">
    <interactant intactId="EBI-638194">
        <id>P53365</id>
    </interactant>
    <interactant intactId="EBI-347978">
        <id>P37198</id>
        <label>NUP62</label>
    </interactant>
    <organismsDiffer>false</organismsDiffer>
    <experiments>3</experiments>
</comment>
<comment type="interaction">
    <interactant intactId="EBI-638194">
        <id>P53365</id>
    </interactant>
    <interactant intactId="EBI-741171">
        <id>Q96AL5</id>
        <label>PBX3</label>
    </interactant>
    <organismsDiffer>false</organismsDiffer>
    <experiments>3</experiments>
</comment>
<comment type="interaction">
    <interactant intactId="EBI-638194">
        <id>P53365</id>
    </interactant>
    <interactant intactId="EBI-2692890">
        <id>Q96KN3</id>
        <label>PKNOX2</label>
    </interactant>
    <organismsDiffer>false</organismsDiffer>
    <experiments>5</experiments>
</comment>
<comment type="interaction">
    <interactant intactId="EBI-638194">
        <id>P53365</id>
    </interactant>
    <interactant intactId="EBI-608347">
        <id>Q04941</id>
        <label>PLP2</label>
    </interactant>
    <organismsDiffer>false</organismsDiffer>
    <experiments>5</experiments>
</comment>
<comment type="interaction">
    <interactant intactId="EBI-638194">
        <id>P53365</id>
    </interactant>
    <interactant intactId="EBI-5544229">
        <id>P30405</id>
        <label>PPIF</label>
    </interactant>
    <organismsDiffer>false</organismsDiffer>
    <experiments>3</experiments>
</comment>
<comment type="interaction">
    <interactant intactId="EBI-638194">
        <id>P53365</id>
    </interactant>
    <interactant intactId="EBI-5280197">
        <id>O75400-2</id>
        <label>PRPF40A</label>
    </interactant>
    <organismsDiffer>false</organismsDiffer>
    <experiments>3</experiments>
</comment>
<comment type="interaction">
    <interactant intactId="EBI-638194">
        <id>P53365</id>
    </interactant>
    <interactant intactId="EBI-413628">
        <id>P63000</id>
        <label>RAC1</label>
    </interactant>
    <organismsDiffer>false</organismsDiffer>
    <experiments>13</experiments>
</comment>
<comment type="interaction">
    <interactant intactId="EBI-638194">
        <id>P53365</id>
    </interactant>
    <interactant intactId="EBI-489652">
        <id>P15153</id>
        <label>RAC2</label>
    </interactant>
    <organismsDiffer>false</organismsDiffer>
    <experiments>3</experiments>
</comment>
<comment type="interaction">
    <interactant intactId="EBI-638194">
        <id>P53365</id>
    </interactant>
    <interactant intactId="EBI-767084">
        <id>P60763</id>
        <label>RAC3</label>
    </interactant>
    <organismsDiffer>false</organismsDiffer>
    <experiments>3</experiments>
</comment>
<comment type="interaction">
    <interactant intactId="EBI-638194">
        <id>P53365</id>
    </interactant>
    <interactant intactId="EBI-1549827">
        <id>Q00765</id>
        <label>REEP5</label>
    </interactant>
    <organismsDiffer>false</organismsDiffer>
    <experiments>3</experiments>
</comment>
<comment type="interaction">
    <interactant intactId="EBI-638194">
        <id>P53365</id>
    </interactant>
    <interactant intactId="EBI-10829018">
        <id>Q04864-2</id>
        <label>REL</label>
    </interactant>
    <organismsDiffer>false</organismsDiffer>
    <experiments>3</experiments>
</comment>
<comment type="interaction">
    <interactant intactId="EBI-638194">
        <id>P53365</id>
    </interactant>
    <interactant intactId="EBI-448618">
        <id>Q92730</id>
        <label>RND1</label>
    </interactant>
    <organismsDiffer>false</organismsDiffer>
    <experiments>3</experiments>
</comment>
<comment type="interaction">
    <interactant intactId="EBI-638194">
        <id>P53365</id>
    </interactant>
    <interactant intactId="EBI-954338">
        <id>O15126</id>
        <label>SCAMP1</label>
    </interactant>
    <organismsDiffer>false</organismsDiffer>
    <experiments>3</experiments>
</comment>
<comment type="interaction">
    <interactant intactId="EBI-638194">
        <id>P53365</id>
    </interactant>
    <interactant intactId="EBI-2695784">
        <id>Q8TAC9</id>
        <label>SCAMP5</label>
    </interactant>
    <organismsDiffer>false</organismsDiffer>
    <experiments>3</experiments>
</comment>
<comment type="interaction">
    <interactant intactId="EBI-638194">
        <id>P53365</id>
    </interactant>
    <interactant intactId="EBI-727004">
        <id>O00560</id>
        <label>SDCBP</label>
    </interactant>
    <organismsDiffer>false</organismsDiffer>
    <experiments>3</experiments>
</comment>
<comment type="interaction">
    <interactant intactId="EBI-638194">
        <id>P53365</id>
    </interactant>
    <interactant intactId="EBI-2623095">
        <id>Q9Y371</id>
        <label>SH3GLB1</label>
    </interactant>
    <organismsDiffer>false</organismsDiffer>
    <experiments>6</experiments>
</comment>
<comment type="interaction">
    <interactant intactId="EBI-638194">
        <id>P53365</id>
    </interactant>
    <interactant intactId="EBI-2872322">
        <id>Q9H0W8</id>
        <label>SMG9</label>
    </interactant>
    <organismsDiffer>false</organismsDiffer>
    <experiments>3</experiments>
</comment>
<comment type="interaction">
    <interactant intactId="EBI-638194">
        <id>P53365</id>
    </interactant>
    <interactant intactId="EBI-9071725">
        <id>P08247</id>
        <label>SYP</label>
    </interactant>
    <organismsDiffer>false</organismsDiffer>
    <experiments>3</experiments>
</comment>
<comment type="interaction">
    <interactant intactId="EBI-638194">
        <id>P53365</id>
    </interactant>
    <interactant intactId="EBI-2870087">
        <id>Q8WV15</id>
        <label>TMEM255B</label>
    </interactant>
    <organismsDiffer>false</organismsDiffer>
    <experiments>3</experiments>
</comment>
<comment type="interaction">
    <interactant intactId="EBI-638194">
        <id>P53365</id>
    </interactant>
    <interactant intactId="EBI-2130429">
        <id>Q9BYV2</id>
        <label>TRIM54</label>
    </interactant>
    <organismsDiffer>false</organismsDiffer>
    <experiments>3</experiments>
</comment>
<comment type="interaction">
    <interactant intactId="EBI-638194">
        <id>P53365</id>
    </interactant>
    <interactant intactId="EBI-10210710">
        <id>P49638</id>
        <label>TTPA</label>
    </interactant>
    <organismsDiffer>false</organismsDiffer>
    <experiments>3</experiments>
</comment>
<comment type="interaction">
    <interactant intactId="EBI-638194">
        <id>P53365</id>
    </interactant>
    <interactant intactId="EBI-739895">
        <id>Q8N6Y0</id>
        <label>USHBP1</label>
    </interactant>
    <organismsDiffer>false</organismsDiffer>
    <experiments>3</experiments>
</comment>
<comment type="subcellular location">
    <subcellularLocation>
        <location evidence="7">Golgi apparatus</location>
    </subcellularLocation>
    <subcellularLocation>
        <location evidence="5 6 9 10 11">Golgi apparatus</location>
        <location evidence="5 6 9 10 11">trans-Golgi network membrane</location>
    </subcellularLocation>
</comment>
<comment type="alternative products">
    <event type="alternative splicing"/>
    <isoform>
        <id>P53365-1</id>
        <name>1</name>
        <sequence type="displayed"/>
    </isoform>
    <isoform>
        <id>P53365-2</id>
        <name>2</name>
        <sequence type="described" ref="VSP_042524"/>
    </isoform>
    <isoform>
        <id>P53365-3</id>
        <name>3</name>
        <sequence type="described" ref="VSP_046913"/>
    </isoform>
</comment>
<sequence>MTDGILGKAATMEIPIHGNGEARQLPEDDGLEQDLQQVMVSGPNLNETSIVSGGYGGSGDGLIPTGSGRHPSHSTTPSGPGDEVARGIAGEKFDIVKKWGINTYKCTKQLLSERFGRGSRTVDLELELQIELLRETKRKYESVLQLGRALTAHLYSLLQTQHALGDAFADLSQKSPELQEEFGYNAETQKLLCKNGETLLGAVNFFVSSINTLVTKTMEDTLMTVKQYEAARLEYDAYRTDLEELSLGPRDAGTRGRLESAQATFQAHRDKYEKLRGDVAIKLKFLEENKIKVMHKQLLLFHNAVSAYFAGNQKQLEQTLQQFNIKLRPPGAEKPSWLEEQ</sequence>
<protein>
    <recommendedName>
        <fullName evidence="16">Arfaptin-2</fullName>
    </recommendedName>
    <alternativeName>
        <fullName evidence="16">ADP-ribosylation factor-interacting protein 2</fullName>
    </alternativeName>
    <alternativeName>
        <fullName evidence="15">Partner of RAC1</fullName>
        <shortName evidence="15">POR1</shortName>
    </alternativeName>
</protein>
<evidence type="ECO:0000255" key="1">
    <source>
        <dbReference type="PROSITE-ProRule" id="PRU00294"/>
    </source>
</evidence>
<evidence type="ECO:0000256" key="2">
    <source>
        <dbReference type="SAM" id="MobiDB-lite"/>
    </source>
</evidence>
<evidence type="ECO:0000269" key="3">
    <source>
    </source>
</evidence>
<evidence type="ECO:0000269" key="4">
    <source>
    </source>
</evidence>
<evidence type="ECO:0000269" key="5">
    <source>
    </source>
</evidence>
<evidence type="ECO:0000269" key="6">
    <source>
    </source>
</evidence>
<evidence type="ECO:0000269" key="7">
    <source>
    </source>
</evidence>
<evidence type="ECO:0000269" key="8">
    <source>
    </source>
</evidence>
<evidence type="ECO:0000269" key="9">
    <source>
    </source>
</evidence>
<evidence type="ECO:0000269" key="10">
    <source>
    </source>
</evidence>
<evidence type="ECO:0000269" key="11">
    <source>
    </source>
</evidence>
<evidence type="ECO:0000269" key="12">
    <source>
    </source>
</evidence>
<evidence type="ECO:0000303" key="13">
    <source>
    </source>
</evidence>
<evidence type="ECO:0000303" key="14">
    <source>
    </source>
</evidence>
<evidence type="ECO:0000303" key="15">
    <source>
    </source>
</evidence>
<evidence type="ECO:0000303" key="16">
    <source>
    </source>
</evidence>
<evidence type="ECO:0000305" key="17"/>
<evidence type="ECO:0000312" key="18">
    <source>
        <dbReference type="HGNC" id="HGNC:17160"/>
    </source>
</evidence>
<evidence type="ECO:0007744" key="19">
    <source>
    </source>
</evidence>
<evidence type="ECO:0007829" key="20">
    <source>
        <dbReference type="PDB" id="1I4D"/>
    </source>
</evidence>
<evidence type="ECO:0007829" key="21">
    <source>
        <dbReference type="PDB" id="1I4T"/>
    </source>
</evidence>
<evidence type="ECO:0007829" key="22">
    <source>
        <dbReference type="PDB" id="4DCN"/>
    </source>
</evidence>
<dbReference type="EMBL" id="U52522">
    <property type="protein sequence ID" value="AAA97924.1"/>
    <property type="molecule type" value="mRNA"/>
</dbReference>
<dbReference type="EMBL" id="AK301856">
    <property type="protein sequence ID" value="BAG63298.1"/>
    <property type="molecule type" value="mRNA"/>
</dbReference>
<dbReference type="EMBL" id="AK304512">
    <property type="protein sequence ID" value="BAG65318.1"/>
    <property type="molecule type" value="mRNA"/>
</dbReference>
<dbReference type="EMBL" id="AC084337">
    <property type="status" value="NOT_ANNOTATED_CDS"/>
    <property type="molecule type" value="Genomic_DNA"/>
</dbReference>
<dbReference type="EMBL" id="CH471064">
    <property type="protein sequence ID" value="EAW68707.1"/>
    <property type="molecule type" value="Genomic_DNA"/>
</dbReference>
<dbReference type="EMBL" id="CH471064">
    <property type="protein sequence ID" value="EAW68708.1"/>
    <property type="molecule type" value="Genomic_DNA"/>
</dbReference>
<dbReference type="EMBL" id="BC000392">
    <property type="protein sequence ID" value="AAH00392.1"/>
    <property type="molecule type" value="mRNA"/>
</dbReference>
<dbReference type="EMBL" id="X97567">
    <property type="protein sequence ID" value="CAA66179.1"/>
    <property type="molecule type" value="mRNA"/>
</dbReference>
<dbReference type="CCDS" id="CCDS55739.1">
    <molecule id="P53365-2"/>
</dbReference>
<dbReference type="CCDS" id="CCDS55740.1">
    <molecule id="P53365-3"/>
</dbReference>
<dbReference type="CCDS" id="CCDS7765.1">
    <molecule id="P53365-1"/>
</dbReference>
<dbReference type="PIR" id="G02516">
    <property type="entry name" value="G02516"/>
</dbReference>
<dbReference type="RefSeq" id="NP_001229784.1">
    <molecule id="P53365-3"/>
    <property type="nucleotide sequence ID" value="NM_001242855.3"/>
</dbReference>
<dbReference type="RefSeq" id="NP_001229785.1">
    <molecule id="P53365-2"/>
    <property type="nucleotide sequence ID" value="NM_001242856.3"/>
</dbReference>
<dbReference type="RefSeq" id="NP_001357337.1">
    <molecule id="P53365-3"/>
    <property type="nucleotide sequence ID" value="NM_001370408.2"/>
</dbReference>
<dbReference type="RefSeq" id="NP_001363487.1">
    <molecule id="P53365-1"/>
    <property type="nucleotide sequence ID" value="NM_001376558.2"/>
</dbReference>
<dbReference type="RefSeq" id="NP_001363492.1">
    <molecule id="P53365-3"/>
    <property type="nucleotide sequence ID" value="NM_001376563.2"/>
</dbReference>
<dbReference type="RefSeq" id="NP_036534.1">
    <molecule id="P53365-1"/>
    <property type="nucleotide sequence ID" value="NM_012402.5"/>
</dbReference>
<dbReference type="RefSeq" id="XP_005252897.1">
    <property type="nucleotide sequence ID" value="XM_005252840.4"/>
</dbReference>
<dbReference type="PDB" id="1I49">
    <property type="method" value="X-ray"/>
    <property type="resolution" value="2.80 A"/>
    <property type="chains" value="A/B=118-341"/>
</dbReference>
<dbReference type="PDB" id="1I4D">
    <property type="method" value="X-ray"/>
    <property type="resolution" value="2.50 A"/>
    <property type="chains" value="A/B=118-341"/>
</dbReference>
<dbReference type="PDB" id="1I4L">
    <property type="method" value="X-ray"/>
    <property type="resolution" value="2.70 A"/>
    <property type="chains" value="A/B=118-341"/>
</dbReference>
<dbReference type="PDB" id="1I4T">
    <property type="method" value="X-ray"/>
    <property type="resolution" value="2.60 A"/>
    <property type="chains" value="A/B=118-341"/>
</dbReference>
<dbReference type="PDB" id="4DCN">
    <property type="method" value="X-ray"/>
    <property type="resolution" value="3.01 A"/>
    <property type="chains" value="C/D=118-315"/>
</dbReference>
<dbReference type="PDBsum" id="1I49"/>
<dbReference type="PDBsum" id="1I4D"/>
<dbReference type="PDBsum" id="1I4L"/>
<dbReference type="PDBsum" id="1I4T"/>
<dbReference type="PDBsum" id="4DCN"/>
<dbReference type="SMR" id="P53365"/>
<dbReference type="BioGRID" id="117174">
    <property type="interactions" value="110"/>
</dbReference>
<dbReference type="CORUM" id="P53365"/>
<dbReference type="FunCoup" id="P53365">
    <property type="interactions" value="1330"/>
</dbReference>
<dbReference type="IntAct" id="P53365">
    <property type="interactions" value="92"/>
</dbReference>
<dbReference type="MINT" id="P53365"/>
<dbReference type="STRING" id="9606.ENSP00000484121"/>
<dbReference type="GlyGen" id="P53365">
    <property type="glycosylation" value="1 site, 1 O-linked glycan (1 site)"/>
</dbReference>
<dbReference type="iPTMnet" id="P53365"/>
<dbReference type="PhosphoSitePlus" id="P53365"/>
<dbReference type="BioMuta" id="ARFIP2"/>
<dbReference type="DMDM" id="1703205"/>
<dbReference type="jPOST" id="P53365"/>
<dbReference type="MassIVE" id="P53365"/>
<dbReference type="PaxDb" id="9606-ENSP00000484121"/>
<dbReference type="PeptideAtlas" id="P53365"/>
<dbReference type="ProteomicsDB" id="56573">
    <molecule id="P53365-1"/>
</dbReference>
<dbReference type="ProteomicsDB" id="56574">
    <molecule id="P53365-2"/>
</dbReference>
<dbReference type="Pumba" id="P53365"/>
<dbReference type="Antibodypedia" id="23860">
    <property type="antibodies" value="234 antibodies from 28 providers"/>
</dbReference>
<dbReference type="DNASU" id="23647"/>
<dbReference type="Ensembl" id="ENST00000254584.6">
    <molecule id="P53365-1"/>
    <property type="protein sequence ID" value="ENSP00000254584.2"/>
    <property type="gene ID" value="ENSG00000132254.13"/>
</dbReference>
<dbReference type="Ensembl" id="ENST00000396777.8">
    <molecule id="P53365-1"/>
    <property type="protein sequence ID" value="ENSP00000379998.3"/>
    <property type="gene ID" value="ENSG00000132254.13"/>
</dbReference>
<dbReference type="Ensembl" id="ENST00000423813.6">
    <molecule id="P53365-3"/>
    <property type="protein sequence ID" value="ENSP00000398375.2"/>
    <property type="gene ID" value="ENSG00000132254.13"/>
</dbReference>
<dbReference type="Ensembl" id="ENST00000445086.6">
    <molecule id="P53365-2"/>
    <property type="protein sequence ID" value="ENSP00000391427.2"/>
    <property type="gene ID" value="ENSG00000132254.13"/>
</dbReference>
<dbReference type="GeneID" id="23647"/>
<dbReference type="KEGG" id="hsa:23647"/>
<dbReference type="MANE-Select" id="ENST00000396777.8">
    <property type="protein sequence ID" value="ENSP00000379998.3"/>
    <property type="RefSeq nucleotide sequence ID" value="NM_001376558.2"/>
    <property type="RefSeq protein sequence ID" value="NP_001363487.1"/>
</dbReference>
<dbReference type="UCSC" id="uc001mdk.4">
    <molecule id="P53365-1"/>
    <property type="organism name" value="human"/>
</dbReference>
<dbReference type="AGR" id="HGNC:17160"/>
<dbReference type="CTD" id="23647"/>
<dbReference type="DisGeNET" id="23647"/>
<dbReference type="GeneCards" id="ARFIP2"/>
<dbReference type="HGNC" id="HGNC:17160">
    <property type="gene designation" value="ARFIP2"/>
</dbReference>
<dbReference type="HPA" id="ENSG00000132254">
    <property type="expression patterns" value="Low tissue specificity"/>
</dbReference>
<dbReference type="MIM" id="601638">
    <property type="type" value="gene"/>
</dbReference>
<dbReference type="neXtProt" id="NX_P53365"/>
<dbReference type="OpenTargets" id="ENSG00000132254"/>
<dbReference type="PharmGKB" id="PA134879398"/>
<dbReference type="VEuPathDB" id="HostDB:ENSG00000132254"/>
<dbReference type="eggNOG" id="KOG3876">
    <property type="taxonomic scope" value="Eukaryota"/>
</dbReference>
<dbReference type="GeneTree" id="ENSGT00950000183040"/>
<dbReference type="HOGENOM" id="CLU_047975_3_0_1"/>
<dbReference type="InParanoid" id="P53365"/>
<dbReference type="OMA" id="GRENYLA"/>
<dbReference type="OrthoDB" id="9994780at2759"/>
<dbReference type="PAN-GO" id="P53365">
    <property type="GO annotations" value="4 GO annotations based on evolutionary models"/>
</dbReference>
<dbReference type="PhylomeDB" id="P53365"/>
<dbReference type="TreeFam" id="TF314945"/>
<dbReference type="PathwayCommons" id="P53365"/>
<dbReference type="Reactome" id="R-HSA-6811440">
    <property type="pathway name" value="Retrograde transport at the Trans-Golgi-Network"/>
</dbReference>
<dbReference type="SignaLink" id="P53365"/>
<dbReference type="SIGNOR" id="P53365"/>
<dbReference type="BioGRID-ORCS" id="23647">
    <property type="hits" value="9 hits in 1153 CRISPR screens"/>
</dbReference>
<dbReference type="ChiTaRS" id="ARFIP2">
    <property type="organism name" value="human"/>
</dbReference>
<dbReference type="EvolutionaryTrace" id="P53365"/>
<dbReference type="GeneWiki" id="ARFIP2"/>
<dbReference type="GenomeRNAi" id="23647"/>
<dbReference type="Pharos" id="P53365">
    <property type="development level" value="Tbio"/>
</dbReference>
<dbReference type="PRO" id="PR:P53365"/>
<dbReference type="Proteomes" id="UP000005640">
    <property type="component" value="Chromosome 11"/>
</dbReference>
<dbReference type="RNAct" id="P53365">
    <property type="molecule type" value="protein"/>
</dbReference>
<dbReference type="Bgee" id="ENSG00000132254">
    <property type="expression patterns" value="Expressed in olfactory segment of nasal mucosa and 195 other cell types or tissues"/>
</dbReference>
<dbReference type="ExpressionAtlas" id="P53365">
    <property type="expression patterns" value="baseline and differential"/>
</dbReference>
<dbReference type="GO" id="GO:0005938">
    <property type="term" value="C:cell cortex"/>
    <property type="evidence" value="ECO:0000314"/>
    <property type="project" value="UniProtKB"/>
</dbReference>
<dbReference type="GO" id="GO:0005737">
    <property type="term" value="C:cytoplasm"/>
    <property type="evidence" value="ECO:0000314"/>
    <property type="project" value="BHF-UCL"/>
</dbReference>
<dbReference type="GO" id="GO:0005829">
    <property type="term" value="C:cytosol"/>
    <property type="evidence" value="ECO:0000304"/>
    <property type="project" value="Reactome"/>
</dbReference>
<dbReference type="GO" id="GO:0005794">
    <property type="term" value="C:Golgi apparatus"/>
    <property type="evidence" value="ECO:0000314"/>
    <property type="project" value="HPA"/>
</dbReference>
<dbReference type="GO" id="GO:0005730">
    <property type="term" value="C:nucleolus"/>
    <property type="evidence" value="ECO:0000314"/>
    <property type="project" value="HPA"/>
</dbReference>
<dbReference type="GO" id="GO:0005886">
    <property type="term" value="C:plasma membrane"/>
    <property type="evidence" value="ECO:0000304"/>
    <property type="project" value="UniProtKB"/>
</dbReference>
<dbReference type="GO" id="GO:0001726">
    <property type="term" value="C:ruffle"/>
    <property type="evidence" value="ECO:0000315"/>
    <property type="project" value="UniProtKB"/>
</dbReference>
<dbReference type="GO" id="GO:0032588">
    <property type="term" value="C:trans-Golgi network membrane"/>
    <property type="evidence" value="ECO:0000314"/>
    <property type="project" value="FlyBase"/>
</dbReference>
<dbReference type="GO" id="GO:0045296">
    <property type="term" value="F:cadherin binding"/>
    <property type="evidence" value="ECO:0007005"/>
    <property type="project" value="BHF-UCL"/>
</dbReference>
<dbReference type="GO" id="GO:0005525">
    <property type="term" value="F:GTP binding"/>
    <property type="evidence" value="ECO:0000304"/>
    <property type="project" value="ProtInc"/>
</dbReference>
<dbReference type="GO" id="GO:0030742">
    <property type="term" value="F:GTP-dependent protein binding"/>
    <property type="evidence" value="ECO:0000353"/>
    <property type="project" value="UniProtKB"/>
</dbReference>
<dbReference type="GO" id="GO:0042802">
    <property type="term" value="F:identical protein binding"/>
    <property type="evidence" value="ECO:0000353"/>
    <property type="project" value="IntAct"/>
</dbReference>
<dbReference type="GO" id="GO:0140090">
    <property type="term" value="F:membrane curvature sensor activity"/>
    <property type="evidence" value="ECO:0000314"/>
    <property type="project" value="FlyBase"/>
</dbReference>
<dbReference type="GO" id="GO:0070273">
    <property type="term" value="F:phosphatidylinositol-4-phosphate binding"/>
    <property type="evidence" value="ECO:0000314"/>
    <property type="project" value="FlyBase"/>
</dbReference>
<dbReference type="GO" id="GO:0005543">
    <property type="term" value="F:phospholipid binding"/>
    <property type="evidence" value="ECO:0000318"/>
    <property type="project" value="GO_Central"/>
</dbReference>
<dbReference type="GO" id="GO:0019904">
    <property type="term" value="F:protein domain specific binding"/>
    <property type="evidence" value="ECO:0007669"/>
    <property type="project" value="InterPro"/>
</dbReference>
<dbReference type="GO" id="GO:0031267">
    <property type="term" value="F:small GTPase binding"/>
    <property type="evidence" value="ECO:0000304"/>
    <property type="project" value="UniProtKB"/>
</dbReference>
<dbReference type="GO" id="GO:0030036">
    <property type="term" value="P:actin cytoskeleton organization"/>
    <property type="evidence" value="ECO:0000315"/>
    <property type="project" value="UniProtKB"/>
</dbReference>
<dbReference type="GO" id="GO:0006886">
    <property type="term" value="P:intracellular protein transport"/>
    <property type="evidence" value="ECO:0000318"/>
    <property type="project" value="GO_Central"/>
</dbReference>
<dbReference type="GO" id="GO:0030032">
    <property type="term" value="P:lamellipodium assembly"/>
    <property type="evidence" value="ECO:0000304"/>
    <property type="project" value="UniProtKB"/>
</dbReference>
<dbReference type="GO" id="GO:0000423">
    <property type="term" value="P:mitophagy"/>
    <property type="evidence" value="ECO:0000315"/>
    <property type="project" value="UniProtKB"/>
</dbReference>
<dbReference type="GO" id="GO:0034497">
    <property type="term" value="P:protein localization to phagophore assembly site"/>
    <property type="evidence" value="ECO:0000315"/>
    <property type="project" value="UniProtKB"/>
</dbReference>
<dbReference type="GO" id="GO:0034315">
    <property type="term" value="P:regulation of Arp2/3 complex-mediated actin nucleation"/>
    <property type="evidence" value="ECO:0000318"/>
    <property type="project" value="GO_Central"/>
</dbReference>
<dbReference type="GO" id="GO:0031529">
    <property type="term" value="P:ruffle organization"/>
    <property type="evidence" value="ECO:0000304"/>
    <property type="project" value="UniProtKB"/>
</dbReference>
<dbReference type="GO" id="GO:0007264">
    <property type="term" value="P:small GTPase-mediated signal transduction"/>
    <property type="evidence" value="ECO:0000304"/>
    <property type="project" value="ProtInc"/>
</dbReference>
<dbReference type="CDD" id="cd07660">
    <property type="entry name" value="BAR_Arfaptin"/>
    <property type="match status" value="1"/>
</dbReference>
<dbReference type="FunFam" id="1.20.1270.60:FF:000003">
    <property type="entry name" value="arfaptin-2 isoform X1"/>
    <property type="match status" value="1"/>
</dbReference>
<dbReference type="Gene3D" id="1.20.1270.60">
    <property type="entry name" value="Arfaptin homology (AH) domain/BAR domain"/>
    <property type="match status" value="1"/>
</dbReference>
<dbReference type="InterPro" id="IPR027267">
    <property type="entry name" value="AH/BAR_dom_sf"/>
</dbReference>
<dbReference type="InterPro" id="IPR010504">
    <property type="entry name" value="AH_dom"/>
</dbReference>
<dbReference type="InterPro" id="IPR030798">
    <property type="entry name" value="Arfaptin_fam"/>
</dbReference>
<dbReference type="PANTHER" id="PTHR12141:SF3">
    <property type="entry name" value="ARFAPTIN-2"/>
    <property type="match status" value="1"/>
</dbReference>
<dbReference type="PANTHER" id="PTHR12141">
    <property type="entry name" value="ARFAPTIN-RELATED"/>
    <property type="match status" value="1"/>
</dbReference>
<dbReference type="Pfam" id="PF06456">
    <property type="entry name" value="Arfaptin"/>
    <property type="match status" value="1"/>
</dbReference>
<dbReference type="SMART" id="SM01015">
    <property type="entry name" value="Arfaptin"/>
    <property type="match status" value="1"/>
</dbReference>
<dbReference type="SUPFAM" id="SSF103657">
    <property type="entry name" value="BAR/IMD domain-like"/>
    <property type="match status" value="1"/>
</dbReference>
<dbReference type="PROSITE" id="PS50870">
    <property type="entry name" value="AH"/>
    <property type="match status" value="1"/>
</dbReference>
<organism>
    <name type="scientific">Homo sapiens</name>
    <name type="common">Human</name>
    <dbReference type="NCBI Taxonomy" id="9606"/>
    <lineage>
        <taxon>Eukaryota</taxon>
        <taxon>Metazoa</taxon>
        <taxon>Chordata</taxon>
        <taxon>Craniata</taxon>
        <taxon>Vertebrata</taxon>
        <taxon>Euteleostomi</taxon>
        <taxon>Mammalia</taxon>
        <taxon>Eutheria</taxon>
        <taxon>Euarchontoglires</taxon>
        <taxon>Primates</taxon>
        <taxon>Haplorrhini</taxon>
        <taxon>Catarrhini</taxon>
        <taxon>Hominidae</taxon>
        <taxon>Homo</taxon>
    </lineage>
</organism>
<proteinExistence type="evidence at protein level"/>
<reference key="1">
    <citation type="journal article" date="1997" name="J. Biol. Chem.">
        <title>Arfaptin 1, a putative cytosolic target protein of ADP-ribosylation factor, is recruited to Golgi membranes.</title>
        <authorList>
            <person name="Kanoh H."/>
            <person name="Williger B.-T."/>
            <person name="Exton J.H."/>
        </authorList>
    </citation>
    <scope>NUCLEOTIDE SEQUENCE [MRNA] (ISOFORM 1)</scope>
</reference>
<reference key="2">
    <citation type="journal article" date="2004" name="Nat. Genet.">
        <title>Complete sequencing and characterization of 21,243 full-length human cDNAs.</title>
        <authorList>
            <person name="Ota T."/>
            <person name="Suzuki Y."/>
            <person name="Nishikawa T."/>
            <person name="Otsuki T."/>
            <person name="Sugiyama T."/>
            <person name="Irie R."/>
            <person name="Wakamatsu A."/>
            <person name="Hayashi K."/>
            <person name="Sato H."/>
            <person name="Nagai K."/>
            <person name="Kimura K."/>
            <person name="Makita H."/>
            <person name="Sekine M."/>
            <person name="Obayashi M."/>
            <person name="Nishi T."/>
            <person name="Shibahara T."/>
            <person name="Tanaka T."/>
            <person name="Ishii S."/>
            <person name="Yamamoto J."/>
            <person name="Saito K."/>
            <person name="Kawai Y."/>
            <person name="Isono Y."/>
            <person name="Nakamura Y."/>
            <person name="Nagahari K."/>
            <person name="Murakami K."/>
            <person name="Yasuda T."/>
            <person name="Iwayanagi T."/>
            <person name="Wagatsuma M."/>
            <person name="Shiratori A."/>
            <person name="Sudo H."/>
            <person name="Hosoiri T."/>
            <person name="Kaku Y."/>
            <person name="Kodaira H."/>
            <person name="Kondo H."/>
            <person name="Sugawara M."/>
            <person name="Takahashi M."/>
            <person name="Kanda K."/>
            <person name="Yokoi T."/>
            <person name="Furuya T."/>
            <person name="Kikkawa E."/>
            <person name="Omura Y."/>
            <person name="Abe K."/>
            <person name="Kamihara K."/>
            <person name="Katsuta N."/>
            <person name="Sato K."/>
            <person name="Tanikawa M."/>
            <person name="Yamazaki M."/>
            <person name="Ninomiya K."/>
            <person name="Ishibashi T."/>
            <person name="Yamashita H."/>
            <person name="Murakawa K."/>
            <person name="Fujimori K."/>
            <person name="Tanai H."/>
            <person name="Kimata M."/>
            <person name="Watanabe M."/>
            <person name="Hiraoka S."/>
            <person name="Chiba Y."/>
            <person name="Ishida S."/>
            <person name="Ono Y."/>
            <person name="Takiguchi S."/>
            <person name="Watanabe S."/>
            <person name="Yosida M."/>
            <person name="Hotuta T."/>
            <person name="Kusano J."/>
            <person name="Kanehori K."/>
            <person name="Takahashi-Fujii A."/>
            <person name="Hara H."/>
            <person name="Tanase T.-O."/>
            <person name="Nomura Y."/>
            <person name="Togiya S."/>
            <person name="Komai F."/>
            <person name="Hara R."/>
            <person name="Takeuchi K."/>
            <person name="Arita M."/>
            <person name="Imose N."/>
            <person name="Musashino K."/>
            <person name="Yuuki H."/>
            <person name="Oshima A."/>
            <person name="Sasaki N."/>
            <person name="Aotsuka S."/>
            <person name="Yoshikawa Y."/>
            <person name="Matsunawa H."/>
            <person name="Ichihara T."/>
            <person name="Shiohata N."/>
            <person name="Sano S."/>
            <person name="Moriya S."/>
            <person name="Momiyama H."/>
            <person name="Satoh N."/>
            <person name="Takami S."/>
            <person name="Terashima Y."/>
            <person name="Suzuki O."/>
            <person name="Nakagawa S."/>
            <person name="Senoh A."/>
            <person name="Mizoguchi H."/>
            <person name="Goto Y."/>
            <person name="Shimizu F."/>
            <person name="Wakebe H."/>
            <person name="Hishigaki H."/>
            <person name="Watanabe T."/>
            <person name="Sugiyama A."/>
            <person name="Takemoto M."/>
            <person name="Kawakami B."/>
            <person name="Yamazaki M."/>
            <person name="Watanabe K."/>
            <person name="Kumagai A."/>
            <person name="Itakura S."/>
            <person name="Fukuzumi Y."/>
            <person name="Fujimori Y."/>
            <person name="Komiyama M."/>
            <person name="Tashiro H."/>
            <person name="Tanigami A."/>
            <person name="Fujiwara T."/>
            <person name="Ono T."/>
            <person name="Yamada K."/>
            <person name="Fujii Y."/>
            <person name="Ozaki K."/>
            <person name="Hirao M."/>
            <person name="Ohmori Y."/>
            <person name="Kawabata A."/>
            <person name="Hikiji T."/>
            <person name="Kobatake N."/>
            <person name="Inagaki H."/>
            <person name="Ikema Y."/>
            <person name="Okamoto S."/>
            <person name="Okitani R."/>
            <person name="Kawakami T."/>
            <person name="Noguchi S."/>
            <person name="Itoh T."/>
            <person name="Shigeta K."/>
            <person name="Senba T."/>
            <person name="Matsumura K."/>
            <person name="Nakajima Y."/>
            <person name="Mizuno T."/>
            <person name="Morinaga M."/>
            <person name="Sasaki M."/>
            <person name="Togashi T."/>
            <person name="Oyama M."/>
            <person name="Hata H."/>
            <person name="Watanabe M."/>
            <person name="Komatsu T."/>
            <person name="Mizushima-Sugano J."/>
            <person name="Satoh T."/>
            <person name="Shirai Y."/>
            <person name="Takahashi Y."/>
            <person name="Nakagawa K."/>
            <person name="Okumura K."/>
            <person name="Nagase T."/>
            <person name="Nomura N."/>
            <person name="Kikuchi H."/>
            <person name="Masuho Y."/>
            <person name="Yamashita R."/>
            <person name="Nakai K."/>
            <person name="Yada T."/>
            <person name="Nakamura Y."/>
            <person name="Ohara O."/>
            <person name="Isogai T."/>
            <person name="Sugano S."/>
        </authorList>
    </citation>
    <scope>NUCLEOTIDE SEQUENCE [LARGE SCALE MRNA] (ISOFORMS 2 AND 3)</scope>
    <source>
        <tissue>Testis</tissue>
        <tissue>Uterus</tissue>
    </source>
</reference>
<reference key="3">
    <citation type="journal article" date="2006" name="Nature">
        <title>Human chromosome 11 DNA sequence and analysis including novel gene identification.</title>
        <authorList>
            <person name="Taylor T.D."/>
            <person name="Noguchi H."/>
            <person name="Totoki Y."/>
            <person name="Toyoda A."/>
            <person name="Kuroki Y."/>
            <person name="Dewar K."/>
            <person name="Lloyd C."/>
            <person name="Itoh T."/>
            <person name="Takeda T."/>
            <person name="Kim D.-W."/>
            <person name="She X."/>
            <person name="Barlow K.F."/>
            <person name="Bloom T."/>
            <person name="Bruford E."/>
            <person name="Chang J.L."/>
            <person name="Cuomo C.A."/>
            <person name="Eichler E."/>
            <person name="FitzGerald M.G."/>
            <person name="Jaffe D.B."/>
            <person name="LaButti K."/>
            <person name="Nicol R."/>
            <person name="Park H.-S."/>
            <person name="Seaman C."/>
            <person name="Sougnez C."/>
            <person name="Yang X."/>
            <person name="Zimmer A.R."/>
            <person name="Zody M.C."/>
            <person name="Birren B.W."/>
            <person name="Nusbaum C."/>
            <person name="Fujiyama A."/>
            <person name="Hattori M."/>
            <person name="Rogers J."/>
            <person name="Lander E.S."/>
            <person name="Sakaki Y."/>
        </authorList>
    </citation>
    <scope>NUCLEOTIDE SEQUENCE [LARGE SCALE GENOMIC DNA]</scope>
</reference>
<reference key="4">
    <citation type="submission" date="2005-09" db="EMBL/GenBank/DDBJ databases">
        <authorList>
            <person name="Mural R.J."/>
            <person name="Istrail S."/>
            <person name="Sutton G.G."/>
            <person name="Florea L."/>
            <person name="Halpern A.L."/>
            <person name="Mobarry C.M."/>
            <person name="Lippert R."/>
            <person name="Walenz B."/>
            <person name="Shatkay H."/>
            <person name="Dew I."/>
            <person name="Miller J.R."/>
            <person name="Flanigan M.J."/>
            <person name="Edwards N.J."/>
            <person name="Bolanos R."/>
            <person name="Fasulo D."/>
            <person name="Halldorsson B.V."/>
            <person name="Hannenhalli S."/>
            <person name="Turner R."/>
            <person name="Yooseph S."/>
            <person name="Lu F."/>
            <person name="Nusskern D.R."/>
            <person name="Shue B.C."/>
            <person name="Zheng X.H."/>
            <person name="Zhong F."/>
            <person name="Delcher A.L."/>
            <person name="Huson D.H."/>
            <person name="Kravitz S.A."/>
            <person name="Mouchard L."/>
            <person name="Reinert K."/>
            <person name="Remington K.A."/>
            <person name="Clark A.G."/>
            <person name="Waterman M.S."/>
            <person name="Eichler E.E."/>
            <person name="Adams M.D."/>
            <person name="Hunkapiller M.W."/>
            <person name="Myers E.W."/>
            <person name="Venter J.C."/>
        </authorList>
    </citation>
    <scope>NUCLEOTIDE SEQUENCE [LARGE SCALE GENOMIC DNA]</scope>
</reference>
<reference key="5">
    <citation type="journal article" date="2004" name="Genome Res.">
        <title>The status, quality, and expansion of the NIH full-length cDNA project: the Mammalian Gene Collection (MGC).</title>
        <authorList>
            <consortium name="The MGC Project Team"/>
        </authorList>
    </citation>
    <scope>NUCLEOTIDE SEQUENCE [LARGE SCALE MRNA] (ISOFORM 1)</scope>
    <source>
        <tissue>Lung</tissue>
    </source>
</reference>
<reference key="6">
    <citation type="journal article" date="1996" name="EMBO J.">
        <title>Identification of a novel Rac1-interacting protein involved in membrane ruffling.</title>
        <authorList>
            <person name="van Aelst L."/>
            <person name="Joneson T."/>
            <person name="Bar-Sagi D."/>
        </authorList>
    </citation>
    <scope>NUCLEOTIDE SEQUENCE [MRNA] OF 39-341 (ISOFORM 1)</scope>
</reference>
<reference key="7">
    <citation type="journal article" date="2001" name="J. Biol. Chem.">
        <title>ADP-ribosylation factors (ARFs) and ARF-like 1 (ARL1) have both specific and shared effectors: characterizing ARL1-binding proteins.</title>
        <authorList>
            <person name="Van Valkenburgh H."/>
            <person name="Shern J.F."/>
            <person name="Sharer J.D."/>
            <person name="Zhu X."/>
            <person name="Kahn R.A."/>
        </authorList>
    </citation>
    <scope>INTERACTION WITH ARL1</scope>
</reference>
<reference key="8">
    <citation type="journal article" date="2010" name="Sci. Signal.">
        <title>Quantitative phosphoproteomics reveals widespread full phosphorylation site occupancy during mitosis.</title>
        <authorList>
            <person name="Olsen J.V."/>
            <person name="Vermeulen M."/>
            <person name="Santamaria A."/>
            <person name="Kumar C."/>
            <person name="Miller M.L."/>
            <person name="Jensen L.J."/>
            <person name="Gnad F."/>
            <person name="Cox J."/>
            <person name="Jensen T.S."/>
            <person name="Nigg E.A."/>
            <person name="Brunak S."/>
            <person name="Mann M."/>
        </authorList>
    </citation>
    <scope>IDENTIFICATION BY MASS SPECTROMETRY [LARGE SCALE ANALYSIS]</scope>
    <source>
        <tissue>Cervix carcinoma</tissue>
    </source>
</reference>
<reference key="9">
    <citation type="journal article" date="2011" name="BMC Syst. Biol.">
        <title>Initial characterization of the human central proteome.</title>
        <authorList>
            <person name="Burkard T.R."/>
            <person name="Planyavsky M."/>
            <person name="Kaupe I."/>
            <person name="Breitwieser F.P."/>
            <person name="Buerckstuemmer T."/>
            <person name="Bennett K.L."/>
            <person name="Superti-Furga G."/>
            <person name="Colinge J."/>
        </authorList>
    </citation>
    <scope>IDENTIFICATION BY MASS SPECTROMETRY [LARGE SCALE ANALYSIS]</scope>
</reference>
<reference key="10">
    <citation type="journal article" date="2011" name="J. Biol. Chem.">
        <title>Arfaptins are localized to the trans-Golgi by interaction with Arl1, but not Arfs.</title>
        <authorList>
            <person name="Man Z."/>
            <person name="Kondo Y."/>
            <person name="Koga H."/>
            <person name="Umino H."/>
            <person name="Nakayama K."/>
            <person name="Shin H.W."/>
        </authorList>
    </citation>
    <scope>SUBCELLULAR LOCATION</scope>
    <scope>INTERACTION WITH ARL1 AND ARFIP1</scope>
    <scope>SUBUNIT</scope>
</reference>
<reference key="11">
    <citation type="journal article" date="2012" name="Dev. Cell">
        <title>The BAR domain protein Arfaptin-1 controls secretory granule biogenesis at the trans-Golgi network.</title>
        <authorList>
            <person name="Gehart H."/>
            <person name="Goginashvili A."/>
            <person name="Beck R."/>
            <person name="Morvan J."/>
            <person name="Erbs E."/>
            <person name="Formentini I."/>
            <person name="De Matteis M.A."/>
            <person name="Schwab Y."/>
            <person name="Wieland F.T."/>
            <person name="Ricci R."/>
        </authorList>
    </citation>
    <scope>SUBCELLULAR LOCATION</scope>
</reference>
<reference key="12">
    <citation type="journal article" date="2013" name="J. Proteome Res.">
        <title>Toward a comprehensive characterization of a human cancer cell phosphoproteome.</title>
        <authorList>
            <person name="Zhou H."/>
            <person name="Di Palma S."/>
            <person name="Preisinger C."/>
            <person name="Peng M."/>
            <person name="Polat A.N."/>
            <person name="Heck A.J."/>
            <person name="Mohammed S."/>
        </authorList>
    </citation>
    <scope>PHOSPHORYLATION [LARGE SCALE ANALYSIS] AT SER-72 AND THR-76</scope>
    <scope>IDENTIFICATION BY MASS SPECTROMETRY [LARGE SCALE ANALYSIS]</scope>
    <source>
        <tissue>Cervix carcinoma</tissue>
        <tissue>Erythroleukemia</tissue>
    </source>
</reference>
<reference key="13">
    <citation type="journal article" date="2014" name="J. Proteomics">
        <title>An enzyme assisted RP-RPLC approach for in-depth analysis of human liver phosphoproteome.</title>
        <authorList>
            <person name="Bian Y."/>
            <person name="Song C."/>
            <person name="Cheng K."/>
            <person name="Dong M."/>
            <person name="Wang F."/>
            <person name="Huang J."/>
            <person name="Sun D."/>
            <person name="Wang L."/>
            <person name="Ye M."/>
            <person name="Zou H."/>
        </authorList>
    </citation>
    <scope>IDENTIFICATION BY MASS SPECTROMETRY [LARGE SCALE ANALYSIS]</scope>
    <source>
        <tissue>Liver</tissue>
    </source>
</reference>
<reference key="14">
    <citation type="journal article" date="2015" name="Cell. Signal.">
        <title>Dimer of arfaptin 2 regulates NF-kappaB signaling by interacting with IKKbeta/NEMO and inhibiting IKKbeta kinase activity.</title>
        <authorList>
            <person name="You D.J."/>
            <person name="Park C.R."/>
            <person name="Furlong M."/>
            <person name="Koo O."/>
            <person name="Lee C."/>
            <person name="Ahn C."/>
            <person name="Seong J.Y."/>
            <person name="Hwang J.I."/>
        </authorList>
    </citation>
    <scope>FUNCTION</scope>
    <scope>INTERACTION WITH IKBKG AND IKBKB</scope>
</reference>
<reference key="15">
    <citation type="journal article" date="2016" name="J. Biol. Chem.">
        <title>Protein Kinase D2 Assembles a Multiprotein Complex at the Trans-Golgi Network to Regulate Matrix Metalloproteinase Secretion.</title>
        <authorList>
            <person name="Eiseler T."/>
            <person name="Wille C."/>
            <person name="Koehler C."/>
            <person name="Illing A."/>
            <person name="Seufferlein T."/>
        </authorList>
    </citation>
    <scope>FUNCTION</scope>
    <scope>SUBCELLULAR LOCATION</scope>
    <scope>INTERACTION WITH ARL1</scope>
</reference>
<reference key="16">
    <citation type="journal article" date="2019" name="Autophagy">
        <title>ATG9A supplies PtdIns4P to the autophagosome initiation site.</title>
        <authorList>
            <person name="Judith D."/>
            <person name="Tooze S.A."/>
        </authorList>
    </citation>
    <scope>FUNCTION</scope>
    <scope>SUBCELLULAR LOCATION</scope>
</reference>
<reference key="17">
    <citation type="journal article" date="2019" name="J. Cell Biol.">
        <title>ATG9A shapes the forming autophagosome through Arfaptin 2 and phosphatidylinositol 4-kinase IIIbeta.</title>
        <authorList>
            <person name="Judith D."/>
            <person name="Jefferies H.B.J."/>
            <person name="Boeing S."/>
            <person name="Frith D."/>
            <person name="Snijders A.P."/>
            <person name="Tooze S.A."/>
        </authorList>
    </citation>
    <scope>FUNCTION</scope>
    <scope>SUBCELLULAR LOCATION</scope>
    <scope>MUTAGENESIS OF TRP-99</scope>
</reference>
<reference key="18">
    <citation type="journal article" date="2021" name="Mol. Cell">
        <title>ATG4 family proteins drive phagophore growth independently of the LC3/GABARAP lipidation system.</title>
        <authorList>
            <person name="Nguyen T.N."/>
            <person name="Padman B.S."/>
            <person name="Zellner S."/>
            <person name="Khuu G."/>
            <person name="Uoselis L."/>
            <person name="Lam W.K."/>
            <person name="Skulsuppaisarn M."/>
            <person name="Lindblom R.S.J."/>
            <person name="Watts E.M."/>
            <person name="Behrends C."/>
            <person name="Lazarou M."/>
        </authorList>
    </citation>
    <scope>FUNCTION</scope>
</reference>
<reference key="19">
    <citation type="journal article" date="2001" name="Nature">
        <title>The structural basis of Arfaptin-mediated cross-talk between Rac and Arf signalling pathways.</title>
        <authorList>
            <person name="Tarricone C."/>
            <person name="Xiao B."/>
            <person name="Justin N."/>
            <person name="Walker P.A."/>
            <person name="Rittinger K."/>
            <person name="Gamblin S.J."/>
            <person name="Smerdon S.J."/>
        </authorList>
    </citation>
    <scope>X-RAY CRYSTALLOGRAPHY (2.5 ANGSTROMS) OF 118-341 IN COMPLEX WITH RAC1</scope>
</reference>
<reference key="20">
    <citation type="journal article" date="2012" name="J. Biol. Chem.">
        <title>Structural basis for membrane binding specificity of the Bin/Amphiphysin/Rvs (BAR) domain of Arfaptin-2 determined by Arl1 GTPase.</title>
        <authorList>
            <person name="Nakamura K."/>
            <person name="Man Z."/>
            <person name="Xie Y."/>
            <person name="Hanai A."/>
            <person name="Makyio H."/>
            <person name="Kawasaki M."/>
            <person name="Kato R."/>
            <person name="Shin H.W."/>
            <person name="Nakayama K."/>
            <person name="Wakatsuki S."/>
        </authorList>
    </citation>
    <scope>X-RAY CRYSTALLOGRAPHY (3.01 ANGSTROMS) OF 118-315</scope>
    <scope>INTERACTION WITH ARL1</scope>
    <scope>SUBCELLULAR LOCATION</scope>
</reference>
<gene>
    <name evidence="14 18" type="primary">ARFIP2</name>
    <name evidence="15" type="synonym">POR1</name>
</gene>
<accession>P53365</accession>
<accession>B4DX86</accession>
<accession>B4E306</accession>
<accession>D3DQT5</accession>
<feature type="chain" id="PRO_0000064667" description="Arfaptin-2">
    <location>
        <begin position="1"/>
        <end position="341"/>
    </location>
</feature>
<feature type="domain" description="AH" evidence="1">
    <location>
        <begin position="121"/>
        <end position="321"/>
    </location>
</feature>
<feature type="region of interest" description="Disordered" evidence="2">
    <location>
        <begin position="46"/>
        <end position="85"/>
    </location>
</feature>
<feature type="modified residue" description="Phosphoserine" evidence="19">
    <location>
        <position position="72"/>
    </location>
</feature>
<feature type="modified residue" description="Phosphothreonine" evidence="19">
    <location>
        <position position="76"/>
    </location>
</feature>
<feature type="splice variant" id="VSP_042524" description="In isoform 2." evidence="13">
    <original>MTDGILGKAATMEIPIHGNGEARQLPEDDGLEQDLQQVMVSGPNLNETSIVSGGYGGSGDGLIPTGSGRHPSHSTTPSGPGDEVARGIAGEKFDIVKKWGINTYK</original>
    <variation>MKPALCLVAMGALVMDSSPQ</variation>
    <location>
        <begin position="1"/>
        <end position="105"/>
    </location>
</feature>
<feature type="splice variant" id="VSP_046913" description="In isoform 3." evidence="13">
    <location>
        <begin position="1"/>
        <end position="38"/>
    </location>
</feature>
<feature type="mutagenesis site" description="Abolished ability to regulate ATG9A trafficking." evidence="10">
    <original>W</original>
    <variation>A</variation>
    <location>
        <position position="99"/>
    </location>
</feature>
<feature type="sequence conflict" description="In Ref. 2; BAG63298." evidence="17" ref="2">
    <original>V</original>
    <variation>A</variation>
    <location>
        <position position="225"/>
    </location>
</feature>
<feature type="helix" evidence="20">
    <location>
        <begin position="124"/>
        <end position="173"/>
    </location>
</feature>
<feature type="helix" evidence="20">
    <location>
        <begin position="176"/>
        <end position="178"/>
    </location>
</feature>
<feature type="helix" evidence="20">
    <location>
        <begin position="179"/>
        <end position="215"/>
    </location>
</feature>
<feature type="helix" evidence="20">
    <location>
        <begin position="217"/>
        <end position="245"/>
    </location>
</feature>
<feature type="turn" evidence="21">
    <location>
        <begin position="247"/>
        <end position="249"/>
    </location>
</feature>
<feature type="turn" evidence="22">
    <location>
        <begin position="252"/>
        <end position="254"/>
    </location>
</feature>
<feature type="helix" evidence="20">
    <location>
        <begin position="260"/>
        <end position="316"/>
    </location>
</feature>
<keyword id="KW-0002">3D-structure</keyword>
<keyword id="KW-0025">Alternative splicing</keyword>
<keyword id="KW-0072">Autophagy</keyword>
<keyword id="KW-0333">Golgi apparatus</keyword>
<keyword id="KW-0472">Membrane</keyword>
<keyword id="KW-0597">Phosphoprotein</keyword>
<keyword id="KW-1267">Proteomics identification</keyword>
<keyword id="KW-1185">Reference proteome</keyword>
<name>ARFP2_HUMAN</name>